<accession>A5U866</accession>
<accession>Q11195</accession>
<sequence length="287" mass="32461">MPDELKPHFANVQAHYDLSDDFFRLFLDPTQTYSCAYFERDDMTLQEAQIAKIDLALGKLGLQPGMTLLDVGCGWGATMMRAVEKYDVNVVGLTLSKNQANHVQQLVANSENLRSKRVLLAGWEQFDEPVDRIVSIGAFEHFGHERYDAFFSLAHRLLPADGVMLLHTITGLHPKEIHERGLPMSFTFARFLKFIVTEIFPGGRLPSIPMVQECASANGFTVTRVQSLQPHYAKTLDLWSAALQANKGQAIALQSEEVYERYMKYLTGCAEMFRIGYIDVNQFTCQK</sequence>
<comment type="function">
    <text evidence="3">Catalyzes the conversion of a double bond to a cyclopropane ring at the distal position of an alpha mycolic acid via the transfer of a methylene group from S-adenosyl-L-methionine. Cyclopropanated mycolic acids are key factors participating in cell envelope permeability, host immunomodulation and persistence.</text>
</comment>
<comment type="catalytic activity">
    <reaction evidence="3">
        <text>a 1-acyl-2-(9Z)-enoyl-sn-glycero-3-phospholipid + S-adenosyl-L-methionine = a 1-acyl-2-(9-cyclopronane)-acyl-sn-glycero-3-phospholipid + S-adenosyl-L-homocysteine + H(+)</text>
        <dbReference type="Rhea" id="RHEA:11988"/>
        <dbReference type="ChEBI" id="CHEBI:15378"/>
        <dbReference type="ChEBI" id="CHEBI:57856"/>
        <dbReference type="ChEBI" id="CHEBI:59789"/>
        <dbReference type="ChEBI" id="CHEBI:76593"/>
        <dbReference type="ChEBI" id="CHEBI:76594"/>
        <dbReference type="EC" id="2.1.1.79"/>
    </reaction>
</comment>
<comment type="pathway">
    <text evidence="6">Lipid metabolism; mycolic acid biosynthesis.</text>
</comment>
<comment type="subunit">
    <text evidence="2">Homodimer.</text>
</comment>
<comment type="subcellular location">
    <subcellularLocation>
        <location evidence="1">Cytoplasm</location>
    </subcellularLocation>
</comment>
<comment type="similarity">
    <text evidence="5">Belongs to the CFA/CMAS family.</text>
</comment>
<keyword id="KW-0963">Cytoplasm</keyword>
<keyword id="KW-0444">Lipid biosynthesis</keyword>
<keyword id="KW-0443">Lipid metabolism</keyword>
<keyword id="KW-0489">Methyltransferase</keyword>
<keyword id="KW-1185">Reference proteome</keyword>
<keyword id="KW-0949">S-adenosyl-L-methionine</keyword>
<keyword id="KW-0808">Transferase</keyword>
<reference key="1">
    <citation type="journal article" date="1995" name="Proc. Natl. Acad. Sci. U.S.A.">
        <title>Identification of a gene involved in the biosynthesis of cyclopropanated mycolic acids in Mycobacterium tuberculosis.</title>
        <authorList>
            <person name="Yuan Y."/>
            <person name="Lee R.E."/>
            <person name="Besra G.S."/>
            <person name="Belisle J.T."/>
            <person name="Barry C.E. III"/>
        </authorList>
    </citation>
    <scope>NUCLEOTIDE SEQUENCE [GENOMIC DNA]</scope>
    <scope>FUNCTION AS A CYCLOPROPANE SYNTHASE</scope>
    <scope>CATALYTIC ACTIVITY</scope>
    <scope>NOMENCLATURE</scope>
    <source>
        <strain>ATCC 25177 / H37Ra</strain>
    </source>
</reference>
<reference key="2">
    <citation type="journal article" date="2008" name="PLoS ONE">
        <title>Genetic basis of virulence attenuation revealed by comparative genomic analysis of Mycobacterium tuberculosis strain H37Ra versus H37Rv.</title>
        <authorList>
            <person name="Zheng H."/>
            <person name="Lu L."/>
            <person name="Wang B."/>
            <person name="Pu S."/>
            <person name="Zhang X."/>
            <person name="Zhu G."/>
            <person name="Shi W."/>
            <person name="Zhang L."/>
            <person name="Wang H."/>
            <person name="Wang S."/>
            <person name="Zhao G."/>
            <person name="Zhang Y."/>
        </authorList>
    </citation>
    <scope>NUCLEOTIDE SEQUENCE [LARGE SCALE GENOMIC DNA]</scope>
    <source>
        <strain>ATCC 25177 / H37Ra</strain>
    </source>
</reference>
<evidence type="ECO:0000250" key="1"/>
<evidence type="ECO:0000250" key="2">
    <source>
        <dbReference type="UniProtKB" id="P9WPB7"/>
    </source>
</evidence>
<evidence type="ECO:0000269" key="3">
    <source>
    </source>
</evidence>
<evidence type="ECO:0000303" key="4">
    <source>
    </source>
</evidence>
<evidence type="ECO:0000305" key="5"/>
<evidence type="ECO:0000305" key="6">
    <source>
    </source>
</evidence>
<proteinExistence type="evidence at protein level"/>
<organism>
    <name type="scientific">Mycobacterium tuberculosis (strain ATCC 25177 / H37Ra)</name>
    <dbReference type="NCBI Taxonomy" id="419947"/>
    <lineage>
        <taxon>Bacteria</taxon>
        <taxon>Bacillati</taxon>
        <taxon>Actinomycetota</taxon>
        <taxon>Actinomycetes</taxon>
        <taxon>Mycobacteriales</taxon>
        <taxon>Mycobacteriaceae</taxon>
        <taxon>Mycobacterium</taxon>
        <taxon>Mycobacterium tuberculosis complex</taxon>
    </lineage>
</organism>
<feature type="chain" id="PRO_0000300063" description="Cyclopropane mycolic acid synthase 1">
    <location>
        <begin position="1"/>
        <end position="287"/>
    </location>
</feature>
<feature type="active site" evidence="2">
    <location>
        <position position="269"/>
    </location>
</feature>
<feature type="binding site" evidence="2">
    <location>
        <begin position="33"/>
        <end position="34"/>
    </location>
    <ligand>
        <name>S-adenosyl-L-methionine</name>
        <dbReference type="ChEBI" id="CHEBI:59789"/>
    </ligand>
</feature>
<feature type="binding site" evidence="2">
    <location>
        <begin position="68"/>
        <end position="76"/>
    </location>
    <ligand>
        <name>S-adenosyl-L-methionine</name>
        <dbReference type="ChEBI" id="CHEBI:59789"/>
    </ligand>
</feature>
<feature type="binding site" evidence="2">
    <location>
        <begin position="94"/>
        <end position="99"/>
    </location>
    <ligand>
        <name>S-adenosyl-L-methionine</name>
        <dbReference type="ChEBI" id="CHEBI:59789"/>
    </ligand>
</feature>
<feature type="binding site" evidence="2">
    <location>
        <begin position="123"/>
        <end position="124"/>
    </location>
    <ligand>
        <name>S-adenosyl-L-methionine</name>
        <dbReference type="ChEBI" id="CHEBI:59789"/>
    </ligand>
</feature>
<gene>
    <name type="primary">cmaA1</name>
    <name evidence="4" type="synonym">cma1</name>
    <name type="ordered locus">MRA_3431</name>
</gene>
<protein>
    <recommendedName>
        <fullName>Cyclopropane mycolic acid synthase 1</fullName>
        <shortName>CMAS</shortName>
        <ecNumber evidence="3">2.1.1.79</ecNumber>
    </recommendedName>
    <alternativeName>
        <fullName>Cyclopropane-fatty-acyl-phospholipid synthase</fullName>
        <shortName>CFA synthase</shortName>
        <shortName>Cyclopropane fatty acid synthase</shortName>
    </alternativeName>
    <alternativeName>
        <fullName>Mycolic acid methyltransferase</fullName>
        <shortName>MA-MT</shortName>
    </alternativeName>
    <alternativeName>
        <fullName>S-adenosylmethionine-dependent methyltransferase</fullName>
        <shortName>AdoMet-MT</shortName>
        <shortName>SAM-MT</shortName>
    </alternativeName>
</protein>
<dbReference type="EC" id="2.1.1.79" evidence="3"/>
<dbReference type="EMBL" id="U27357">
    <property type="protein sequence ID" value="AAA75624.1"/>
    <property type="molecule type" value="Genomic_DNA"/>
</dbReference>
<dbReference type="EMBL" id="CP000611">
    <property type="protein sequence ID" value="ABQ75216.1"/>
    <property type="molecule type" value="Genomic_DNA"/>
</dbReference>
<dbReference type="RefSeq" id="WP_003900041.1">
    <property type="nucleotide sequence ID" value="NZ_CP016972.1"/>
</dbReference>
<dbReference type="SMR" id="A5U866"/>
<dbReference type="KEGG" id="mra:MRA_3431"/>
<dbReference type="eggNOG" id="COG2230">
    <property type="taxonomic scope" value="Bacteria"/>
</dbReference>
<dbReference type="HOGENOM" id="CLU_026434_3_0_11"/>
<dbReference type="UniPathway" id="UPA00915"/>
<dbReference type="Proteomes" id="UP000001988">
    <property type="component" value="Chromosome"/>
</dbReference>
<dbReference type="GO" id="GO:0005737">
    <property type="term" value="C:cytoplasm"/>
    <property type="evidence" value="ECO:0007669"/>
    <property type="project" value="UniProtKB-SubCell"/>
</dbReference>
<dbReference type="GO" id="GO:0008825">
    <property type="term" value="F:cyclopropane-fatty-acyl-phospholipid synthase activity"/>
    <property type="evidence" value="ECO:0000315"/>
    <property type="project" value="UniProtKB"/>
</dbReference>
<dbReference type="GO" id="GO:0008610">
    <property type="term" value="P:lipid biosynthetic process"/>
    <property type="evidence" value="ECO:0007669"/>
    <property type="project" value="InterPro"/>
</dbReference>
<dbReference type="GO" id="GO:0032259">
    <property type="term" value="P:methylation"/>
    <property type="evidence" value="ECO:0007669"/>
    <property type="project" value="UniProtKB-KW"/>
</dbReference>
<dbReference type="CDD" id="cd02440">
    <property type="entry name" value="AdoMet_MTases"/>
    <property type="match status" value="1"/>
</dbReference>
<dbReference type="FunFam" id="3.40.50.150:FF:000115">
    <property type="entry name" value="Cyclopropane mycolic acid synthase 1"/>
    <property type="match status" value="1"/>
</dbReference>
<dbReference type="Gene3D" id="3.40.50.150">
    <property type="entry name" value="Vaccinia Virus protein VP39"/>
    <property type="match status" value="1"/>
</dbReference>
<dbReference type="InterPro" id="IPR050723">
    <property type="entry name" value="CFA/CMAS"/>
</dbReference>
<dbReference type="InterPro" id="IPR003333">
    <property type="entry name" value="CMAS"/>
</dbReference>
<dbReference type="InterPro" id="IPR047672">
    <property type="entry name" value="CMAS_actinobact"/>
</dbReference>
<dbReference type="InterPro" id="IPR029063">
    <property type="entry name" value="SAM-dependent_MTases_sf"/>
</dbReference>
<dbReference type="NCBIfam" id="NF040660">
    <property type="entry name" value="mycolic_MTase"/>
    <property type="match status" value="1"/>
</dbReference>
<dbReference type="PANTHER" id="PTHR43667">
    <property type="entry name" value="CYCLOPROPANE-FATTY-ACYL-PHOSPHOLIPID SYNTHASE"/>
    <property type="match status" value="1"/>
</dbReference>
<dbReference type="PANTHER" id="PTHR43667:SF1">
    <property type="entry name" value="CYCLOPROPANE-FATTY-ACYL-PHOSPHOLIPID SYNTHASE"/>
    <property type="match status" value="1"/>
</dbReference>
<dbReference type="Pfam" id="PF02353">
    <property type="entry name" value="CMAS"/>
    <property type="match status" value="1"/>
</dbReference>
<dbReference type="PIRSF" id="PIRSF003085">
    <property type="entry name" value="CMAS"/>
    <property type="match status" value="1"/>
</dbReference>
<dbReference type="SUPFAM" id="SSF53335">
    <property type="entry name" value="S-adenosyl-L-methionine-dependent methyltransferases"/>
    <property type="match status" value="1"/>
</dbReference>
<name>CMAS1_MYCTA</name>